<organism>
    <name type="scientific">Rippkaea orientalis (strain PCC 8801 / RF-1)</name>
    <name type="common">Cyanothece sp. (strain PCC 8801)</name>
    <dbReference type="NCBI Taxonomy" id="41431"/>
    <lineage>
        <taxon>Bacteria</taxon>
        <taxon>Bacillati</taxon>
        <taxon>Cyanobacteriota</taxon>
        <taxon>Cyanophyceae</taxon>
        <taxon>Oscillatoriophycideae</taxon>
        <taxon>Chroococcales</taxon>
        <taxon>Aphanothecaceae</taxon>
        <taxon>Rippkaea</taxon>
        <taxon>Rippkaea orientalis</taxon>
    </lineage>
</organism>
<keyword id="KW-0460">Magnesium</keyword>
<keyword id="KW-0464">Manganese</keyword>
<keyword id="KW-0479">Metal-binding</keyword>
<keyword id="KW-1185">Reference proteome</keyword>
<keyword id="KW-0786">Thiamine pyrophosphate</keyword>
<keyword id="KW-0808">Transferase</keyword>
<accession>B7K0T5</accession>
<evidence type="ECO:0000255" key="1">
    <source>
        <dbReference type="HAMAP-Rule" id="MF_01659"/>
    </source>
</evidence>
<dbReference type="EC" id="2.2.1.9" evidence="1"/>
<dbReference type="EMBL" id="CP001287">
    <property type="protein sequence ID" value="ACK65076.1"/>
    <property type="molecule type" value="Genomic_DNA"/>
</dbReference>
<dbReference type="RefSeq" id="WP_012594351.1">
    <property type="nucleotide sequence ID" value="NC_011726.1"/>
</dbReference>
<dbReference type="SMR" id="B7K0T5"/>
<dbReference type="STRING" id="41431.PCC8801_1000"/>
<dbReference type="KEGG" id="cyp:PCC8801_1000"/>
<dbReference type="eggNOG" id="COG1165">
    <property type="taxonomic scope" value="Bacteria"/>
</dbReference>
<dbReference type="HOGENOM" id="CLU_006051_3_0_3"/>
<dbReference type="OrthoDB" id="9791859at2"/>
<dbReference type="UniPathway" id="UPA00995"/>
<dbReference type="UniPathway" id="UPA01057">
    <property type="reaction ID" value="UER00164"/>
</dbReference>
<dbReference type="Proteomes" id="UP000008204">
    <property type="component" value="Chromosome"/>
</dbReference>
<dbReference type="GO" id="GO:0070204">
    <property type="term" value="F:2-succinyl-5-enolpyruvyl-6-hydroxy-3-cyclohexene-1-carboxylic-acid synthase activity"/>
    <property type="evidence" value="ECO:0007669"/>
    <property type="project" value="UniProtKB-UniRule"/>
</dbReference>
<dbReference type="GO" id="GO:0000287">
    <property type="term" value="F:magnesium ion binding"/>
    <property type="evidence" value="ECO:0007669"/>
    <property type="project" value="UniProtKB-UniRule"/>
</dbReference>
<dbReference type="GO" id="GO:0030145">
    <property type="term" value="F:manganese ion binding"/>
    <property type="evidence" value="ECO:0007669"/>
    <property type="project" value="UniProtKB-UniRule"/>
</dbReference>
<dbReference type="GO" id="GO:0030976">
    <property type="term" value="F:thiamine pyrophosphate binding"/>
    <property type="evidence" value="ECO:0007669"/>
    <property type="project" value="UniProtKB-UniRule"/>
</dbReference>
<dbReference type="GO" id="GO:0009234">
    <property type="term" value="P:menaquinone biosynthetic process"/>
    <property type="evidence" value="ECO:0007669"/>
    <property type="project" value="InterPro"/>
</dbReference>
<dbReference type="GO" id="GO:0042372">
    <property type="term" value="P:phylloquinone biosynthetic process"/>
    <property type="evidence" value="ECO:0007669"/>
    <property type="project" value="UniProtKB-UniRule"/>
</dbReference>
<dbReference type="CDD" id="cd07037">
    <property type="entry name" value="TPP_PYR_MenD"/>
    <property type="match status" value="1"/>
</dbReference>
<dbReference type="CDD" id="cd02009">
    <property type="entry name" value="TPP_SHCHC_synthase"/>
    <property type="match status" value="1"/>
</dbReference>
<dbReference type="Gene3D" id="3.40.50.970">
    <property type="match status" value="2"/>
</dbReference>
<dbReference type="Gene3D" id="3.40.50.1220">
    <property type="entry name" value="TPP-binding domain"/>
    <property type="match status" value="1"/>
</dbReference>
<dbReference type="HAMAP" id="MF_01659">
    <property type="entry name" value="MenD"/>
    <property type="match status" value="1"/>
</dbReference>
<dbReference type="InterPro" id="IPR004433">
    <property type="entry name" value="MenaQ_synth_MenD"/>
</dbReference>
<dbReference type="InterPro" id="IPR032264">
    <property type="entry name" value="MenD_middle"/>
</dbReference>
<dbReference type="InterPro" id="IPR029061">
    <property type="entry name" value="THDP-binding"/>
</dbReference>
<dbReference type="InterPro" id="IPR012001">
    <property type="entry name" value="Thiamin_PyroP_enz_TPP-bd_dom"/>
</dbReference>
<dbReference type="NCBIfam" id="TIGR00173">
    <property type="entry name" value="menD"/>
    <property type="match status" value="1"/>
</dbReference>
<dbReference type="PANTHER" id="PTHR42916">
    <property type="entry name" value="2-SUCCINYL-5-ENOLPYRUVYL-6-HYDROXY-3-CYCLOHEXENE-1-CARBOXYLATE SYNTHASE"/>
    <property type="match status" value="1"/>
</dbReference>
<dbReference type="PANTHER" id="PTHR42916:SF1">
    <property type="entry name" value="PROTEIN PHYLLO, CHLOROPLASTIC"/>
    <property type="match status" value="1"/>
</dbReference>
<dbReference type="Pfam" id="PF16582">
    <property type="entry name" value="TPP_enzyme_M_2"/>
    <property type="match status" value="1"/>
</dbReference>
<dbReference type="Pfam" id="PF02776">
    <property type="entry name" value="TPP_enzyme_N"/>
    <property type="match status" value="1"/>
</dbReference>
<dbReference type="PIRSF" id="PIRSF004983">
    <property type="entry name" value="MenD"/>
    <property type="match status" value="1"/>
</dbReference>
<dbReference type="SUPFAM" id="SSF52518">
    <property type="entry name" value="Thiamin diphosphate-binding fold (THDP-binding)"/>
    <property type="match status" value="2"/>
</dbReference>
<name>MEND_RIPO1</name>
<protein>
    <recommendedName>
        <fullName evidence="1">2-succinyl-5-enolpyruvyl-6-hydroxy-3-cyclohexene-1-carboxylate synthase</fullName>
        <shortName evidence="1">SEPHCHC synthase</shortName>
        <ecNumber evidence="1">2.2.1.9</ecNumber>
    </recommendedName>
</protein>
<reference key="1">
    <citation type="journal article" date="2011" name="MBio">
        <title>Novel metabolic attributes of the genus Cyanothece, comprising a group of unicellular nitrogen-fixing Cyanobacteria.</title>
        <authorList>
            <person name="Bandyopadhyay A."/>
            <person name="Elvitigala T."/>
            <person name="Welsh E."/>
            <person name="Stockel J."/>
            <person name="Liberton M."/>
            <person name="Min H."/>
            <person name="Sherman L.A."/>
            <person name="Pakrasi H.B."/>
        </authorList>
    </citation>
    <scope>NUCLEOTIDE SEQUENCE [LARGE SCALE GENOMIC DNA]</scope>
    <source>
        <strain>PCC 8801 / RF-1</strain>
    </source>
</reference>
<gene>
    <name evidence="1" type="primary">menD</name>
    <name type="ordered locus">PCC8801_1000</name>
</gene>
<proteinExistence type="inferred from homology"/>
<comment type="function">
    <text evidence="1">Catalyzes the thiamine diphosphate-dependent decarboxylation of 2-oxoglutarate and the subsequent addition of the resulting succinic semialdehyde-thiamine pyrophosphate anion to isochorismate to yield 2-succinyl-5-enolpyruvyl-6-hydroxy-3-cyclohexene-1-carboxylate (SEPHCHC).</text>
</comment>
<comment type="catalytic activity">
    <reaction evidence="1">
        <text>isochorismate + 2-oxoglutarate + H(+) = 5-enolpyruvoyl-6-hydroxy-2-succinyl-cyclohex-3-ene-1-carboxylate + CO2</text>
        <dbReference type="Rhea" id="RHEA:25593"/>
        <dbReference type="ChEBI" id="CHEBI:15378"/>
        <dbReference type="ChEBI" id="CHEBI:16526"/>
        <dbReference type="ChEBI" id="CHEBI:16810"/>
        <dbReference type="ChEBI" id="CHEBI:29780"/>
        <dbReference type="ChEBI" id="CHEBI:58818"/>
        <dbReference type="EC" id="2.2.1.9"/>
    </reaction>
</comment>
<comment type="cofactor">
    <cofactor evidence="1">
        <name>Mg(2+)</name>
        <dbReference type="ChEBI" id="CHEBI:18420"/>
    </cofactor>
    <cofactor evidence="1">
        <name>Mn(2+)</name>
        <dbReference type="ChEBI" id="CHEBI:29035"/>
    </cofactor>
</comment>
<comment type="cofactor">
    <cofactor evidence="1">
        <name>thiamine diphosphate</name>
        <dbReference type="ChEBI" id="CHEBI:58937"/>
    </cofactor>
    <text evidence="1">Binds 1 thiamine pyrophosphate per subunit.</text>
</comment>
<comment type="pathway">
    <text evidence="1">Quinol/quinone metabolism; 1,4-dihydroxy-2-naphthoate biosynthesis; 1,4-dihydroxy-2-naphthoate from chorismate: step 2/7.</text>
</comment>
<comment type="pathway">
    <text evidence="1">Cofactor biosynthesis; phylloquinone biosynthesis.</text>
</comment>
<comment type="subunit">
    <text evidence="1">Homodimer.</text>
</comment>
<comment type="similarity">
    <text evidence="1">Belongs to the TPP enzyme family. MenD subfamily.</text>
</comment>
<sequence length="591" mass="67057">MSLDFRNINTLWSSVIVETLHRLGLTTAIICPGSRSTPLAIAFAEHPHITAIPILDERSAAFFALGIAKRTQTPTAMVCTSGTAGANFYPTVIEARESRVPLLIFTADRPPELRHCRAGQAIDQIKLYGNYPNWQTELAIPAPEMGLFRYLRQTIIHGWERSHFPTAGVVHFNCPFREPLAPIIQPEIKELVTNFENNRFFESVKPLQPNLTVPCLSLPPQWLTKKRGIIIAGVAHPKDPELYCQAIANLATFLNYPVLTEALSPVRNFAHLNPNLITTYDLLLRNKELAQNLTPDLVIQIGDFPTSKELRNWLETLEPDHWIIDPSAENSDPLHNKTTYLRLSIESFKLEQSKCIEEKNNKSSWLKTWQIIDQKIREEINLTLESVDFLLEGKVSWLLSQILPPKTPIFIANSMSVRNAEFFWQPNNHQIIPYCNRGANGIDGTLSTALGMAYQAQSSVMLTGDLALIHDTNGFLINPHFRGHLTIILINNNGGGIFEMLPISDFNPLFEAFFATPQNLDFSQLCQTYKIPYQKIRDWPQIEKLLKPLPKAGIRILEVQTDRKKDAVWLKKMLSELAKRVDFRSEELSEN</sequence>
<feature type="chain" id="PRO_1000187065" description="2-succinyl-5-enolpyruvyl-6-hydroxy-3-cyclohexene-1-carboxylate synthase">
    <location>
        <begin position="1"/>
        <end position="591"/>
    </location>
</feature>